<proteinExistence type="inferred from homology"/>
<evidence type="ECO:0000250" key="1"/>
<evidence type="ECO:0000250" key="2">
    <source>
        <dbReference type="UniProtKB" id="P08588"/>
    </source>
</evidence>
<evidence type="ECO:0000250" key="3">
    <source>
        <dbReference type="UniProtKB" id="P18090"/>
    </source>
</evidence>
<evidence type="ECO:0000250" key="4">
    <source>
        <dbReference type="UniProtKB" id="P34971"/>
    </source>
</evidence>
<evidence type="ECO:0000255" key="5"/>
<evidence type="ECO:0000255" key="6">
    <source>
        <dbReference type="PROSITE-ProRule" id="PRU00521"/>
    </source>
</evidence>
<evidence type="ECO:0000256" key="7">
    <source>
        <dbReference type="SAM" id="MobiDB-lite"/>
    </source>
</evidence>
<evidence type="ECO:0000305" key="8"/>
<feature type="chain" id="PRO_0000069116" description="Beta-1 adrenergic receptor">
    <location>
        <begin position="1"/>
        <end position="473"/>
    </location>
</feature>
<feature type="topological domain" description="Extracellular" evidence="1">
    <location>
        <begin position="1"/>
        <end position="55"/>
    </location>
</feature>
<feature type="transmembrane region" description="Helical; Name=1" evidence="1">
    <location>
        <begin position="56"/>
        <end position="84"/>
    </location>
</feature>
<feature type="topological domain" description="Cytoplasmic" evidence="1">
    <location>
        <begin position="85"/>
        <end position="93"/>
    </location>
</feature>
<feature type="transmembrane region" description="Helical; Name=2" evidence="1">
    <location>
        <begin position="94"/>
        <end position="120"/>
    </location>
</feature>
<feature type="topological domain" description="Extracellular" evidence="1">
    <location>
        <begin position="121"/>
        <end position="132"/>
    </location>
</feature>
<feature type="transmembrane region" description="Helical; Name=3" evidence="1">
    <location>
        <begin position="133"/>
        <end position="154"/>
    </location>
</feature>
<feature type="topological domain" description="Cytoplasmic" evidence="1">
    <location>
        <begin position="155"/>
        <end position="172"/>
    </location>
</feature>
<feature type="transmembrane region" description="Helical; Name=4" evidence="1">
    <location>
        <begin position="173"/>
        <end position="196"/>
    </location>
</feature>
<feature type="topological domain" description="Extracellular" evidence="1">
    <location>
        <begin position="197"/>
        <end position="222"/>
    </location>
</feature>
<feature type="transmembrane region" description="Helical; Name=5" evidence="1">
    <location>
        <begin position="223"/>
        <end position="248"/>
    </location>
</feature>
<feature type="topological domain" description="Cytoplasmic" evidence="1">
    <location>
        <begin position="249"/>
        <end position="316"/>
    </location>
</feature>
<feature type="transmembrane region" description="Helical; Name=6" evidence="1">
    <location>
        <begin position="317"/>
        <end position="346"/>
    </location>
</feature>
<feature type="topological domain" description="Extracellular" evidence="1">
    <location>
        <begin position="347"/>
        <end position="351"/>
    </location>
</feature>
<feature type="transmembrane region" description="Helical; Name=7" evidence="1">
    <location>
        <begin position="352"/>
        <end position="374"/>
    </location>
</feature>
<feature type="topological domain" description="Cytoplasmic" evidence="1">
    <location>
        <begin position="375"/>
        <end position="473"/>
    </location>
</feature>
<feature type="region of interest" description="Disordered" evidence="7">
    <location>
        <begin position="270"/>
        <end position="303"/>
    </location>
</feature>
<feature type="region of interest" description="Disordered" evidence="7">
    <location>
        <begin position="397"/>
        <end position="473"/>
    </location>
</feature>
<feature type="short sequence motif" description="PDZ-Binding" evidence="1">
    <location>
        <begin position="470"/>
        <end position="473"/>
    </location>
</feature>
<feature type="compositionally biased region" description="Pro residues" evidence="7">
    <location>
        <begin position="270"/>
        <end position="290"/>
    </location>
</feature>
<feature type="compositionally biased region" description="Acidic residues" evidence="7">
    <location>
        <begin position="418"/>
        <end position="428"/>
    </location>
</feature>
<feature type="compositionally biased region" description="Low complexity" evidence="7">
    <location>
        <begin position="433"/>
        <end position="443"/>
    </location>
</feature>
<feature type="compositionally biased region" description="Low complexity" evidence="7">
    <location>
        <begin position="450"/>
        <end position="473"/>
    </location>
</feature>
<feature type="modified residue" description="Phosphoserine; by PKA" evidence="5">
    <location>
        <position position="309"/>
    </location>
</feature>
<feature type="modified residue" description="Phosphoserine" evidence="3">
    <location>
        <position position="418"/>
    </location>
</feature>
<feature type="lipid moiety-binding region" description="S-palmitoyl cysteine" evidence="1">
    <location>
        <position position="389"/>
    </location>
</feature>
<feature type="glycosylation site" description="N-linked (GlcNAc...) asparagine" evidence="8">
    <location>
        <position position="15"/>
    </location>
</feature>
<feature type="disulfide bond" evidence="6">
    <location>
        <begin position="131"/>
        <end position="216"/>
    </location>
</feature>
<feature type="disulfide bond" evidence="6">
    <location>
        <begin position="209"/>
        <end position="215"/>
    </location>
</feature>
<dbReference type="EMBL" id="U73207">
    <property type="protein sequence ID" value="AAB93648.1"/>
    <property type="molecule type" value="Genomic_DNA"/>
</dbReference>
<dbReference type="SMR" id="P79148"/>
<dbReference type="FunCoup" id="P79148">
    <property type="interactions" value="165"/>
</dbReference>
<dbReference type="STRING" id="9615.ENSCAFP00000035025"/>
<dbReference type="GlyCosmos" id="P79148">
    <property type="glycosylation" value="1 site, No reported glycans"/>
</dbReference>
<dbReference type="PaxDb" id="9612-ENSCAFP00000035025"/>
<dbReference type="eggNOG" id="KOG3656">
    <property type="taxonomic scope" value="Eukaryota"/>
</dbReference>
<dbReference type="InParanoid" id="P79148"/>
<dbReference type="Proteomes" id="UP000002254">
    <property type="component" value="Unplaced"/>
</dbReference>
<dbReference type="Proteomes" id="UP000694429">
    <property type="component" value="Unplaced"/>
</dbReference>
<dbReference type="Proteomes" id="UP000694542">
    <property type="component" value="Unplaced"/>
</dbReference>
<dbReference type="Proteomes" id="UP000805418">
    <property type="component" value="Unplaced"/>
</dbReference>
<dbReference type="GO" id="GO:0005769">
    <property type="term" value="C:early endosome"/>
    <property type="evidence" value="ECO:0000250"/>
    <property type="project" value="UniProtKB"/>
</dbReference>
<dbReference type="GO" id="GO:0005886">
    <property type="term" value="C:plasma membrane"/>
    <property type="evidence" value="ECO:0000250"/>
    <property type="project" value="UniProtKB"/>
</dbReference>
<dbReference type="GO" id="GO:0004940">
    <property type="term" value="F:beta1-adrenergic receptor activity"/>
    <property type="evidence" value="ECO:0000250"/>
    <property type="project" value="UniProtKB"/>
</dbReference>
<dbReference type="GO" id="GO:0071880">
    <property type="term" value="P:adenylate cyclase-activating adrenergic receptor signaling pathway"/>
    <property type="evidence" value="ECO:0000250"/>
    <property type="project" value="UniProtKB"/>
</dbReference>
<dbReference type="GO" id="GO:0002025">
    <property type="term" value="P:norepinephrine-epinephrine-mediated vasodilation involved in regulation of systemic arterial blood pressure"/>
    <property type="evidence" value="ECO:0000318"/>
    <property type="project" value="GO_Central"/>
</dbReference>
<dbReference type="GO" id="GO:0045823">
    <property type="term" value="P:positive regulation of heart contraction"/>
    <property type="evidence" value="ECO:0007669"/>
    <property type="project" value="InterPro"/>
</dbReference>
<dbReference type="GO" id="GO:0043410">
    <property type="term" value="P:positive regulation of MAPK cascade"/>
    <property type="evidence" value="ECO:0000318"/>
    <property type="project" value="GO_Central"/>
</dbReference>
<dbReference type="GO" id="GO:0045187">
    <property type="term" value="P:regulation of circadian sleep/wake cycle, sleep"/>
    <property type="evidence" value="ECO:0000250"/>
    <property type="project" value="UniProtKB"/>
</dbReference>
<dbReference type="CDD" id="cd15958">
    <property type="entry name" value="7tmA_Beta1_AR"/>
    <property type="match status" value="1"/>
</dbReference>
<dbReference type="Gene3D" id="1.20.1070.10">
    <property type="entry name" value="Rhodopsin 7-helix transmembrane proteins"/>
    <property type="match status" value="1"/>
</dbReference>
<dbReference type="InterPro" id="IPR002233">
    <property type="entry name" value="ADR_fam"/>
</dbReference>
<dbReference type="InterPro" id="IPR000507">
    <property type="entry name" value="ADRB1_rcpt"/>
</dbReference>
<dbReference type="InterPro" id="IPR000276">
    <property type="entry name" value="GPCR_Rhodpsn"/>
</dbReference>
<dbReference type="InterPro" id="IPR017452">
    <property type="entry name" value="GPCR_Rhodpsn_7TM"/>
</dbReference>
<dbReference type="PANTHER" id="PTHR24248">
    <property type="entry name" value="ADRENERGIC RECEPTOR-RELATED G-PROTEIN COUPLED RECEPTOR"/>
    <property type="match status" value="1"/>
</dbReference>
<dbReference type="PANTHER" id="PTHR24248:SF54">
    <property type="entry name" value="BETA-1 ADRENERGIC RECEPTOR"/>
    <property type="match status" value="1"/>
</dbReference>
<dbReference type="Pfam" id="PF00001">
    <property type="entry name" value="7tm_1"/>
    <property type="match status" value="1"/>
</dbReference>
<dbReference type="PRINTS" id="PR01103">
    <property type="entry name" value="ADRENERGICR"/>
</dbReference>
<dbReference type="PRINTS" id="PR00561">
    <property type="entry name" value="ADRENRGCB1AR"/>
</dbReference>
<dbReference type="PRINTS" id="PR00237">
    <property type="entry name" value="GPCRRHODOPSN"/>
</dbReference>
<dbReference type="SMART" id="SM01381">
    <property type="entry name" value="7TM_GPCR_Srsx"/>
    <property type="match status" value="1"/>
</dbReference>
<dbReference type="SUPFAM" id="SSF81321">
    <property type="entry name" value="Family A G protein-coupled receptor-like"/>
    <property type="match status" value="1"/>
</dbReference>
<dbReference type="PROSITE" id="PS00237">
    <property type="entry name" value="G_PROTEIN_RECEP_F1_1"/>
    <property type="match status" value="1"/>
</dbReference>
<dbReference type="PROSITE" id="PS50262">
    <property type="entry name" value="G_PROTEIN_RECEP_F1_2"/>
    <property type="match status" value="1"/>
</dbReference>
<accession>P79148</accession>
<comment type="function">
    <text evidence="2 4">Beta-adrenergic receptors mediate the catecholamine-induced activation of adenylate cyclase through the action of G proteins. This receptor binds epinephrine and norepinephrine with approximately equal affinity. Mediates Ras activation through G(s)-alpha- and cAMP-mediated signaling (By similarity). Involved in the regulation of sleep/wake behaviors (By similarity).</text>
</comment>
<comment type="subunit">
    <text evidence="2">Interacts (via C-terminus PDZ motif) with RAPGEF2; the interaction is direct. Interacts with GOPC, MAGI3 and DLG4 (By similarity).</text>
</comment>
<comment type="subcellular location">
    <subcellularLocation>
        <location evidence="3">Cell membrane</location>
        <topology evidence="3">Multi-pass membrane protein</topology>
    </subcellularLocation>
    <subcellularLocation>
        <location evidence="1">Early endosome</location>
    </subcellularLocation>
    <text evidence="1">Colocalizes with RAPGEF2 at the plasma membrane. Found in the Golgi upon GOPC overexpression (By similarity).</text>
</comment>
<comment type="domain">
    <text evidence="1">The PDZ domain-binding motif mediates competitive interactions with GOPC, MAGI3 and DLG4 and plays a role in subcellular location of the receptor.</text>
</comment>
<comment type="PTM">
    <text evidence="1">Homologous desensitization of the receptor is mediated by its phosphorylation by beta-adrenergic receptor kinase.</text>
</comment>
<comment type="similarity">
    <text evidence="6">Belongs to the G-protein coupled receptor 1 family. Adrenergic receptor subfamily. ADRB1 sub-subfamily.</text>
</comment>
<name>ADRB1_CANLF</name>
<organism>
    <name type="scientific">Canis lupus familiaris</name>
    <name type="common">Dog</name>
    <name type="synonym">Canis familiaris</name>
    <dbReference type="NCBI Taxonomy" id="9615"/>
    <lineage>
        <taxon>Eukaryota</taxon>
        <taxon>Metazoa</taxon>
        <taxon>Chordata</taxon>
        <taxon>Craniata</taxon>
        <taxon>Vertebrata</taxon>
        <taxon>Euteleostomi</taxon>
        <taxon>Mammalia</taxon>
        <taxon>Eutheria</taxon>
        <taxon>Laurasiatheria</taxon>
        <taxon>Carnivora</taxon>
        <taxon>Caniformia</taxon>
        <taxon>Canidae</taxon>
        <taxon>Canis</taxon>
    </lineage>
</organism>
<protein>
    <recommendedName>
        <fullName>Beta-1 adrenergic receptor</fullName>
    </recommendedName>
    <alternativeName>
        <fullName>Beta-1 adrenoreceptor</fullName>
        <shortName>Beta-1 adrenoceptor</shortName>
    </alternativeName>
</protein>
<keyword id="KW-1003">Cell membrane</keyword>
<keyword id="KW-1015">Disulfide bond</keyword>
<keyword id="KW-0967">Endosome</keyword>
<keyword id="KW-0297">G-protein coupled receptor</keyword>
<keyword id="KW-0325">Glycoprotein</keyword>
<keyword id="KW-0449">Lipoprotein</keyword>
<keyword id="KW-0472">Membrane</keyword>
<keyword id="KW-0564">Palmitate</keyword>
<keyword id="KW-0597">Phosphoprotein</keyword>
<keyword id="KW-0675">Receptor</keyword>
<keyword id="KW-1185">Reference proteome</keyword>
<keyword id="KW-0807">Transducer</keyword>
<keyword id="KW-0812">Transmembrane</keyword>
<keyword id="KW-1133">Transmembrane helix</keyword>
<sequence>MGAGALALGASEPCNLSSAAPLPDGAATAARLLVPASPSASPLAPTSEGPAPLSQQWTAGIGLLMALIVLLIVAGNVLVIAAIAKTPRLQTLTNLFIMSLASADLVMGLLVVPFGATIVMRGRWEYGSFLCELWTSVDVLCVTASIETLCVIALDRYLAITAPFRYQSLLTRARARALVCTVWAISALVSFLPILMHWWRAGGDEARRCYNDPKCCDFVTNRAYAIASSVVSFYVPLCIMAFVYLRVFREAQKQVKKIDSCERRFLGGPARPPAPPPAPAPAPPPAPGSPRPAAAAPLANGRVGRRRPSRLVALREQKALKTLGIIMGVFTLCWLPFFLANVVKAFHRDLVPDRLFVFFNWLGYANSAFNPIIYCRSPDFRRAFQRLLCCARRAARGSHGAAGDPPRARPPPSPGAASDDDDDDEDDAGAGAGAAPPARLLEPWAGCNGGAAADSDSSLDGAGSPAGASESRV</sequence>
<reference key="1">
    <citation type="journal article" date="1997" name="J. Recept. Signal Transduct.">
        <title>Molecular cloning of the dog beta 1 and beta 2 adrenergic receptors.</title>
        <authorList>
            <person name="Huang R.-R.C."/>
            <person name="Rapoport D."/>
            <person name="Schaeffer M.-T."/>
            <person name="Cascieri M.A."/>
            <person name="Fong T.M."/>
        </authorList>
    </citation>
    <scope>NUCLEOTIDE SEQUENCE [GENOMIC DNA]</scope>
</reference>
<gene>
    <name type="primary">ADRB1</name>
</gene>